<evidence type="ECO:0000250" key="1"/>
<dbReference type="EMBL" id="D84146">
    <property type="protein sequence ID" value="BAA12245.1"/>
    <property type="molecule type" value="Genomic_DNA"/>
</dbReference>
<dbReference type="SMR" id="P0A145"/>
<dbReference type="UniPathway" id="UPA00082"/>
<dbReference type="GO" id="GO:0019867">
    <property type="term" value="C:outer membrane"/>
    <property type="evidence" value="ECO:0007669"/>
    <property type="project" value="InterPro"/>
</dbReference>
<dbReference type="GO" id="GO:0009056">
    <property type="term" value="P:catabolic process"/>
    <property type="evidence" value="ECO:0007669"/>
    <property type="project" value="UniProtKB-KW"/>
</dbReference>
<dbReference type="GO" id="GO:0055085">
    <property type="term" value="P:transmembrane transport"/>
    <property type="evidence" value="ECO:0007669"/>
    <property type="project" value="TreeGrafter"/>
</dbReference>
<dbReference type="Gene3D" id="2.40.160.20">
    <property type="match status" value="1"/>
</dbReference>
<dbReference type="InterPro" id="IPR011250">
    <property type="entry name" value="OMP/PagP_b-brl"/>
</dbReference>
<dbReference type="InterPro" id="IPR005618">
    <property type="entry name" value="OMPW"/>
</dbReference>
<dbReference type="PANTHER" id="PTHR36920">
    <property type="match status" value="1"/>
</dbReference>
<dbReference type="PANTHER" id="PTHR36920:SF1">
    <property type="entry name" value="OUTER MEMBRANE PROTEIN W"/>
    <property type="match status" value="1"/>
</dbReference>
<dbReference type="Pfam" id="PF03922">
    <property type="entry name" value="OmpW"/>
    <property type="match status" value="1"/>
</dbReference>
<dbReference type="SUPFAM" id="SSF56925">
    <property type="entry name" value="OMPA-like"/>
    <property type="match status" value="1"/>
</dbReference>
<sequence length="211" mass="22959">MIKRTICLVYPLFCLASPTWAEESPWTYRIGMTNVAFDASAKVYLNGQRVPGGSADASDNNALTFDFGYAINDQWNVRAIVGIPPTTKVTGAGTLPGIQLGKITYAPTVLTLNYNLPALGPVRPHIGAGVNYTRIFESRDANLKSFDADHAWSPALHVGADIDVNRGWFVSIDIRKLYLKTDASGYLGPQEAKARVTLDPLLTSIAIGRQF</sequence>
<accession>P0A145</accession>
<accession>Q51498</accession>
<accession>Q52461</accession>
<keyword id="KW-0058">Aromatic hydrocarbons catabolism</keyword>
<comment type="function">
    <text evidence="1">May be involved in the conversion of 2-hydroxy-4-(2'-oxo-3,5-cyclohexadienyl)-buta-2,4-dienoate to cis-O-hydroxybenzylidenepyruvate.</text>
</comment>
<comment type="pathway">
    <text>Aromatic compound metabolism; naphthalene degradation.</text>
</comment>
<reference key="1">
    <citation type="submission" date="1996-04" db="EMBL/GenBank/DDBJ databases">
        <title>The molecular analysis of an NAH7-type gene cluster, pah, located on the chromosome of Pseudomonas aeruginosa PaK1.</title>
        <authorList>
            <person name="Takizawa N."/>
            <person name="Iida T."/>
            <person name="Yamauchi K."/>
            <person name="Satoh S."/>
            <person name="Wang Y."/>
            <person name="Fukuda M."/>
            <person name="Kiyohara H."/>
        </authorList>
    </citation>
    <scope>NUCLEOTIDE SEQUENCE [GENOMIC DNA]</scope>
    <source>
        <strain>PaK1</strain>
    </source>
</reference>
<protein>
    <recommendedName>
        <fullName>Dibenzothiophene metabolism operon protein PahQ</fullName>
    </recommendedName>
</protein>
<proteinExistence type="inferred from homology"/>
<organism>
    <name type="scientific">Pseudomonas aeruginosa</name>
    <dbReference type="NCBI Taxonomy" id="287"/>
    <lineage>
        <taxon>Bacteria</taxon>
        <taxon>Pseudomonadati</taxon>
        <taxon>Pseudomonadota</taxon>
        <taxon>Gammaproteobacteria</taxon>
        <taxon>Pseudomonadales</taxon>
        <taxon>Pseudomonadaceae</taxon>
        <taxon>Pseudomonas</taxon>
    </lineage>
</organism>
<name>NAHQ_PSEAI</name>
<feature type="chain" id="PRO_0000096707" description="Dibenzothiophene metabolism operon protein PahQ">
    <location>
        <begin position="1"/>
        <end position="211"/>
    </location>
</feature>
<gene>
    <name type="primary">pahQ</name>
</gene>